<keyword id="KW-0002">3D-structure</keyword>
<keyword id="KW-0025">Alternative splicing</keyword>
<keyword id="KW-0966">Cell projection</keyword>
<keyword id="KW-0969">Cilium</keyword>
<keyword id="KW-0539">Nucleus</keyword>
<keyword id="KW-1185">Reference proteome</keyword>
<keyword id="KW-0677">Repeat</keyword>
<gene>
    <name evidence="11" type="primary">Pdzd7</name>
</gene>
<dbReference type="EMBL" id="KF041446">
    <property type="protein sequence ID" value="AHV90413.1"/>
    <property type="molecule type" value="mRNA"/>
</dbReference>
<dbReference type="EMBL" id="KF041447">
    <property type="protein sequence ID" value="AHV90414.1"/>
    <property type="molecule type" value="mRNA"/>
</dbReference>
<dbReference type="EMBL" id="KF041449">
    <property type="protein sequence ID" value="AHV90416.1"/>
    <property type="molecule type" value="mRNA"/>
</dbReference>
<dbReference type="EMBL" id="KF041450">
    <property type="protein sequence ID" value="AHV90417.1"/>
    <property type="molecule type" value="mRNA"/>
</dbReference>
<dbReference type="EMBL" id="KF041451">
    <property type="protein sequence ID" value="AHV90418.1"/>
    <property type="molecule type" value="mRNA"/>
</dbReference>
<dbReference type="EMBL" id="AC132957">
    <property type="status" value="NOT_ANNOTATED_CDS"/>
    <property type="molecule type" value="Genomic_DNA"/>
</dbReference>
<dbReference type="CCDS" id="CCDS57145.1">
    <molecule id="E9Q9W7-1"/>
</dbReference>
<dbReference type="RefSeq" id="NP_001182194.1">
    <molecule id="E9Q9W7-1"/>
    <property type="nucleotide sequence ID" value="NM_001195265.1"/>
</dbReference>
<dbReference type="RefSeq" id="XP_006526599.1">
    <molecule id="E9Q9W7-1"/>
    <property type="nucleotide sequence ID" value="XM_006526536.3"/>
</dbReference>
<dbReference type="RefSeq" id="XP_006526600.1">
    <molecule id="E9Q9W7-1"/>
    <property type="nucleotide sequence ID" value="XM_006526537.5"/>
</dbReference>
<dbReference type="PDB" id="7DE7">
    <property type="method" value="X-ray"/>
    <property type="resolution" value="1.49 A"/>
    <property type="chains" value="A/B=546-646"/>
</dbReference>
<dbReference type="PDB" id="7WEG">
    <property type="method" value="X-ray"/>
    <property type="resolution" value="2.00 A"/>
    <property type="chains" value="A/B=842-946"/>
</dbReference>
<dbReference type="PDBsum" id="7DE7"/>
<dbReference type="PDBsum" id="7WEG"/>
<dbReference type="SMR" id="E9Q9W7"/>
<dbReference type="ComplexPortal" id="CPX-2501">
    <property type="entry name" value="USH2 complex"/>
</dbReference>
<dbReference type="FunCoup" id="E9Q9W7">
    <property type="interactions" value="71"/>
</dbReference>
<dbReference type="STRING" id="10090.ENSMUSP00000133273"/>
<dbReference type="iPTMnet" id="E9Q9W7"/>
<dbReference type="PhosphoSitePlus" id="E9Q9W7"/>
<dbReference type="PaxDb" id="10090-ENSMUSP00000119002"/>
<dbReference type="Antibodypedia" id="31245">
    <property type="antibodies" value="55 antibodies from 13 providers"/>
</dbReference>
<dbReference type="Ensembl" id="ENSMUST00000145391.9">
    <molecule id="E9Q9W7-2"/>
    <property type="protein sequence ID" value="ENSMUSP00000119002.3"/>
    <property type="gene ID" value="ENSMUSG00000074818.14"/>
</dbReference>
<dbReference type="Ensembl" id="ENSMUST00000169459.4">
    <molecule id="E9Q9W7-1"/>
    <property type="protein sequence ID" value="ENSMUSP00000133273.3"/>
    <property type="gene ID" value="ENSMUSG00000074818.14"/>
</dbReference>
<dbReference type="Ensembl" id="ENSMUST00000237077.2">
    <molecule id="E9Q9W7-4"/>
    <property type="protein sequence ID" value="ENSMUSP00000157527.2"/>
    <property type="gene ID" value="ENSMUSG00000074818.14"/>
</dbReference>
<dbReference type="Ensembl" id="ENSMUST00000237227.2">
    <molecule id="E9Q9W7-3"/>
    <property type="protein sequence ID" value="ENSMUSP00000157966.2"/>
    <property type="gene ID" value="ENSMUSG00000074818.14"/>
</dbReference>
<dbReference type="Ensembl" id="ENSMUST00000237833.2">
    <molecule id="E9Q9W7-5"/>
    <property type="protein sequence ID" value="ENSMUSP00000157695.2"/>
    <property type="gene ID" value="ENSMUSG00000074818.14"/>
</dbReference>
<dbReference type="Ensembl" id="ENSMUST00000237962.2">
    <molecule id="E9Q9W7-4"/>
    <property type="protein sequence ID" value="ENSMUSP00000157471.2"/>
    <property type="gene ID" value="ENSMUSG00000074818.14"/>
</dbReference>
<dbReference type="GeneID" id="100503041"/>
<dbReference type="KEGG" id="mmu:100503041"/>
<dbReference type="UCSC" id="uc012bmk.1">
    <molecule id="E9Q9W7-1"/>
    <property type="organism name" value="mouse"/>
</dbReference>
<dbReference type="AGR" id="MGI:3608325"/>
<dbReference type="CTD" id="79955"/>
<dbReference type="MGI" id="MGI:3608325">
    <property type="gene designation" value="Pdzd7"/>
</dbReference>
<dbReference type="VEuPathDB" id="HostDB:ENSMUSG00000074818"/>
<dbReference type="eggNOG" id="KOG3528">
    <property type="taxonomic scope" value="Eukaryota"/>
</dbReference>
<dbReference type="GeneTree" id="ENSGT00950000183002"/>
<dbReference type="HOGENOM" id="CLU_304541_0_0_1"/>
<dbReference type="InParanoid" id="E9Q9W7"/>
<dbReference type="OMA" id="HWLPEPP"/>
<dbReference type="OrthoDB" id="10029564at2759"/>
<dbReference type="PhylomeDB" id="E9Q9W7"/>
<dbReference type="TreeFam" id="TF325033"/>
<dbReference type="BioGRID-ORCS" id="100503041">
    <property type="hits" value="3 hits in 79 CRISPR screens"/>
</dbReference>
<dbReference type="ChiTaRS" id="Pdzd7">
    <property type="organism name" value="mouse"/>
</dbReference>
<dbReference type="PRO" id="PR:E9Q9W7"/>
<dbReference type="Proteomes" id="UP000000589">
    <property type="component" value="Chromosome 19"/>
</dbReference>
<dbReference type="RNAct" id="E9Q9W7">
    <property type="molecule type" value="protein"/>
</dbReference>
<dbReference type="Bgee" id="ENSMUSG00000074818">
    <property type="expression patterns" value="Expressed in quadriceps femoris and 50 other cell types or tissues"/>
</dbReference>
<dbReference type="ExpressionAtlas" id="E9Q9W7">
    <property type="expression patterns" value="baseline and differential"/>
</dbReference>
<dbReference type="GO" id="GO:0036064">
    <property type="term" value="C:ciliary basal body"/>
    <property type="evidence" value="ECO:0007669"/>
    <property type="project" value="Ensembl"/>
</dbReference>
<dbReference type="GO" id="GO:0005654">
    <property type="term" value="C:nucleoplasm"/>
    <property type="evidence" value="ECO:0007669"/>
    <property type="project" value="Ensembl"/>
</dbReference>
<dbReference type="GO" id="GO:0002141">
    <property type="term" value="C:stereocilia ankle link"/>
    <property type="evidence" value="ECO:0000314"/>
    <property type="project" value="UniProtKB"/>
</dbReference>
<dbReference type="GO" id="GO:0002142">
    <property type="term" value="C:stereocilia ankle link complex"/>
    <property type="evidence" value="ECO:0000314"/>
    <property type="project" value="UniProtKB"/>
</dbReference>
<dbReference type="GO" id="GO:0032420">
    <property type="term" value="C:stereocilium"/>
    <property type="evidence" value="ECO:0000314"/>
    <property type="project" value="UniProtKB"/>
</dbReference>
<dbReference type="GO" id="GO:1990696">
    <property type="term" value="C:USH2 complex"/>
    <property type="evidence" value="ECO:0000314"/>
    <property type="project" value="MGI"/>
</dbReference>
<dbReference type="GO" id="GO:0042802">
    <property type="term" value="F:identical protein binding"/>
    <property type="evidence" value="ECO:0000353"/>
    <property type="project" value="MGI"/>
</dbReference>
<dbReference type="GO" id="GO:0060117">
    <property type="term" value="P:auditory receptor cell development"/>
    <property type="evidence" value="ECO:0000315"/>
    <property type="project" value="MGI"/>
</dbReference>
<dbReference type="GO" id="GO:0060088">
    <property type="term" value="P:auditory receptor cell stereocilium organization"/>
    <property type="evidence" value="ECO:0000315"/>
    <property type="project" value="MGI"/>
</dbReference>
<dbReference type="GO" id="GO:0050910">
    <property type="term" value="P:detection of mechanical stimulus involved in sensory perception of sound"/>
    <property type="evidence" value="ECO:0000315"/>
    <property type="project" value="MGI"/>
</dbReference>
<dbReference type="GO" id="GO:0051649">
    <property type="term" value="P:establishment of localization in cell"/>
    <property type="evidence" value="ECO:0000315"/>
    <property type="project" value="MGI"/>
</dbReference>
<dbReference type="GO" id="GO:0045184">
    <property type="term" value="P:establishment of protein localization"/>
    <property type="evidence" value="ECO:0000315"/>
    <property type="project" value="MGI"/>
</dbReference>
<dbReference type="GO" id="GO:0060113">
    <property type="term" value="P:inner ear receptor cell differentiation"/>
    <property type="evidence" value="ECO:0000303"/>
    <property type="project" value="ComplexPortal"/>
</dbReference>
<dbReference type="CDD" id="cd07358">
    <property type="entry name" value="HN_PDZD7_like"/>
    <property type="match status" value="1"/>
</dbReference>
<dbReference type="CDD" id="cd10833">
    <property type="entry name" value="PDZ1_PDZD7-like"/>
    <property type="match status" value="1"/>
</dbReference>
<dbReference type="CDD" id="cd10834">
    <property type="entry name" value="PDZ2_PDZD7-like"/>
    <property type="match status" value="1"/>
</dbReference>
<dbReference type="CDD" id="cd06751">
    <property type="entry name" value="PDZ3_PDZD7-like"/>
    <property type="match status" value="1"/>
</dbReference>
<dbReference type="FunFam" id="1.20.1160.20:FF:000007">
    <property type="entry name" value="PDZ domain containing 7"/>
    <property type="match status" value="1"/>
</dbReference>
<dbReference type="FunFam" id="2.30.42.10:FF:000090">
    <property type="entry name" value="PDZ domain containing 7"/>
    <property type="match status" value="1"/>
</dbReference>
<dbReference type="FunFam" id="2.30.42.10:FF:000092">
    <property type="entry name" value="PDZ domain containing 7"/>
    <property type="match status" value="1"/>
</dbReference>
<dbReference type="FunFam" id="2.30.42.10:FF:000171">
    <property type="entry name" value="PDZ domain containing 7"/>
    <property type="match status" value="1"/>
</dbReference>
<dbReference type="Gene3D" id="1.20.1160.20">
    <property type="match status" value="1"/>
</dbReference>
<dbReference type="Gene3D" id="2.30.42.10">
    <property type="match status" value="3"/>
</dbReference>
<dbReference type="InterPro" id="IPR001478">
    <property type="entry name" value="PDZ"/>
</dbReference>
<dbReference type="InterPro" id="IPR036034">
    <property type="entry name" value="PDZ_sf"/>
</dbReference>
<dbReference type="InterPro" id="IPR042786">
    <property type="entry name" value="PDZD7_HN-like"/>
</dbReference>
<dbReference type="InterPro" id="IPR051844">
    <property type="entry name" value="USH2_Complex_Protein"/>
</dbReference>
<dbReference type="PANTHER" id="PTHR23116">
    <property type="entry name" value="PDZ DOMAIN CONTAINING WHIRLIN AND HARMONIN-RELATED"/>
    <property type="match status" value="1"/>
</dbReference>
<dbReference type="PANTHER" id="PTHR23116:SF29">
    <property type="entry name" value="PDZ DOMAIN-CONTAINING PROTEIN 7"/>
    <property type="match status" value="1"/>
</dbReference>
<dbReference type="Pfam" id="PF00595">
    <property type="entry name" value="PDZ"/>
    <property type="match status" value="3"/>
</dbReference>
<dbReference type="SMART" id="SM00228">
    <property type="entry name" value="PDZ"/>
    <property type="match status" value="3"/>
</dbReference>
<dbReference type="SUPFAM" id="SSF50156">
    <property type="entry name" value="PDZ domain-like"/>
    <property type="match status" value="3"/>
</dbReference>
<dbReference type="PROSITE" id="PS50106">
    <property type="entry name" value="PDZ"/>
    <property type="match status" value="3"/>
</dbReference>
<accession>E9Q9W7</accession>
<accession>E9Q9U9</accession>
<accession>X4YT42</accession>
<accession>X4YT46</accession>
<accession>X4YZM3</accession>
<accession>X4ZGA7</accession>
<comment type="function">
    <text evidence="5 6">In cochlear developing hair cells, essential in organizing the USH2 complex at stereocilia ankle links (PubMed:24334608). Blocks inhibition of adenylate cyclase activity mediated by ADGRV1 (PubMed:24962568).</text>
</comment>
<comment type="subunit">
    <text evidence="1 4 6 7 8">Homodimerizes (via PDZ2 domain) (PubMed:25406310). Component of USH2 complex, composed of ADGRV1, PDZD7, USH2A and WHRN (PubMed:25406310). Interacts (via PDZ domains) with WHRN; the interaction is direct (PubMed:25406310). Interacts with USH1G (By similarity). Interacts with ADGRV1 (via the cytoplasmic region) (PubMed:23055499, PubMed:24962568). Interacts with USH2A (via the cytoplasmic region) (PubMed:23055499). Interacts with MYO7A (via MyTH4-FERM domains) (PubMed:27525485).</text>
</comment>
<comment type="subcellular location">
    <subcellularLocation>
        <location evidence="1">Cell projection</location>
        <location evidence="1">Cilium</location>
    </subcellularLocation>
    <subcellularLocation>
        <location evidence="1">Nucleus</location>
    </subcellularLocation>
    <subcellularLocation>
        <location evidence="5 8">Cell projection</location>
        <location evidence="5 8">Stereocilium</location>
    </subcellularLocation>
    <text evidence="5 8">Localizes at the ankle region of the stereocilia.</text>
</comment>
<comment type="alternative products">
    <event type="alternative splicing"/>
    <isoform>
        <id>E9Q9W7-1</id>
        <name>1</name>
        <sequence type="displayed"/>
    </isoform>
    <isoform>
        <id>E9Q9W7-2</id>
        <name evidence="9">2</name>
        <sequence type="described" ref="VSP_059957 VSP_059958"/>
    </isoform>
    <isoform>
        <id>E9Q9W7-3</id>
        <name evidence="9">3</name>
        <sequence type="described" ref="VSP_059955 VSP_059956"/>
    </isoform>
    <isoform>
        <id>E9Q9W7-4</id>
        <name evidence="9">4</name>
        <sequence type="described" ref="VSP_059952"/>
    </isoform>
    <isoform>
        <id>E9Q9W7-5</id>
        <name evidence="9">5</name>
        <sequence type="described" ref="VSP_059953 VSP_059954"/>
    </isoform>
</comment>
<comment type="tissue specificity">
    <text evidence="5">Isoform 1 is expressed in developing and adult cochlea but not retina (PubMed:24334608). Isoform 2 is expressed in developing and adult cochlea and retina (PubMed:24334608). Isoform 3 is expressed in adult cochlea and retina (PubMed:24334608). Isoform 4 is expressed in retina and developing cochlea but not adult cochlea (PubMed:24334608). Isoform 5 is expressed in adult cochlea but not in developing cochlea or retina (PubMed:24334608).</text>
</comment>
<comment type="developmental stage">
    <text evidence="5">In cochlea hair cells, only isoforms 1, 2 and 4 are expressed at P5. At P24, isoforms 1, 2, 3 and 5 are expressed.</text>
</comment>
<comment type="disruption phenotype">
    <text evidence="5">Mutant mice exhibit congenital profound deafness and normal vestibular function. They show disorganized stereocilia bundles with a reduction in mechanotransduction currents and sensitivity in cochlear outer cells (PubMed:24334608). Knockout mice have normal vision function from rod and cone photoreceptors (PubMed:24334608).</text>
</comment>
<comment type="miscellaneous">
    <molecule>Isoform 1</molecule>
    <text evidence="5">Expressed in developing and adult cochlea but not retina.</text>
</comment>
<comment type="miscellaneous">
    <molecule>Isoform 2</molecule>
    <text evidence="5">Expressed in developing and adult cochlea and retina.</text>
</comment>
<comment type="miscellaneous">
    <molecule>Isoform 3</molecule>
    <text evidence="5">Expressed in adult cochlea and retina.</text>
</comment>
<comment type="miscellaneous">
    <molecule>Isoform 4</molecule>
    <text evidence="5">Expressed in retina and developing cochlea but not adult cochlea.</text>
</comment>
<comment type="miscellaneous">
    <molecule>Isoform 5</molecule>
    <text evidence="5">Expressed in adult cochlea but not in developing cochlea or retina.</text>
</comment>
<evidence type="ECO:0000250" key="1">
    <source>
        <dbReference type="UniProtKB" id="Q9H5P4"/>
    </source>
</evidence>
<evidence type="ECO:0000255" key="2">
    <source>
        <dbReference type="PROSITE-ProRule" id="PRU00143"/>
    </source>
</evidence>
<evidence type="ECO:0000256" key="3">
    <source>
        <dbReference type="SAM" id="MobiDB-lite"/>
    </source>
</evidence>
<evidence type="ECO:0000269" key="4">
    <source>
    </source>
</evidence>
<evidence type="ECO:0000269" key="5">
    <source>
    </source>
</evidence>
<evidence type="ECO:0000269" key="6">
    <source>
    </source>
</evidence>
<evidence type="ECO:0000269" key="7">
    <source>
    </source>
</evidence>
<evidence type="ECO:0000269" key="8">
    <source>
    </source>
</evidence>
<evidence type="ECO:0000303" key="9">
    <source>
    </source>
</evidence>
<evidence type="ECO:0000305" key="10"/>
<evidence type="ECO:0000312" key="11">
    <source>
        <dbReference type="MGI" id="MGI:3608325"/>
    </source>
</evidence>
<evidence type="ECO:0007829" key="12">
    <source>
        <dbReference type="PDB" id="7DE7"/>
    </source>
</evidence>
<evidence type="ECO:0007829" key="13">
    <source>
        <dbReference type="PDB" id="7WEG"/>
    </source>
</evidence>
<organism>
    <name type="scientific">Mus musculus</name>
    <name type="common">Mouse</name>
    <dbReference type="NCBI Taxonomy" id="10090"/>
    <lineage>
        <taxon>Eukaryota</taxon>
        <taxon>Metazoa</taxon>
        <taxon>Chordata</taxon>
        <taxon>Craniata</taxon>
        <taxon>Vertebrata</taxon>
        <taxon>Euteleostomi</taxon>
        <taxon>Mammalia</taxon>
        <taxon>Eutheria</taxon>
        <taxon>Euarchontoglires</taxon>
        <taxon>Glires</taxon>
        <taxon>Rodentia</taxon>
        <taxon>Myomorpha</taxon>
        <taxon>Muroidea</taxon>
        <taxon>Muridae</taxon>
        <taxon>Murinae</taxon>
        <taxon>Mus</taxon>
        <taxon>Mus</taxon>
    </lineage>
</organism>
<protein>
    <recommendedName>
        <fullName evidence="10">PDZ domain-containing protein 7</fullName>
    </recommendedName>
</protein>
<feature type="chain" id="PRO_0000445738" description="PDZ domain-containing protein 7">
    <location>
        <begin position="1"/>
        <end position="1021"/>
    </location>
</feature>
<feature type="domain" description="PDZ 1" evidence="2">
    <location>
        <begin position="86"/>
        <end position="156"/>
    </location>
</feature>
<feature type="domain" description="PDZ 2" evidence="2">
    <location>
        <begin position="210"/>
        <end position="279"/>
    </location>
</feature>
<feature type="domain" description="PDZ 3" evidence="2">
    <location>
        <begin position="858"/>
        <end position="930"/>
    </location>
</feature>
<feature type="region of interest" description="Disordered" evidence="3">
    <location>
        <begin position="324"/>
        <end position="345"/>
    </location>
</feature>
<feature type="region of interest" description="Disordered" evidence="3">
    <location>
        <begin position="431"/>
        <end position="495"/>
    </location>
</feature>
<feature type="region of interest" description="Disordered" evidence="3">
    <location>
        <begin position="724"/>
        <end position="814"/>
    </location>
</feature>
<feature type="region of interest" description="Disordered" evidence="3">
    <location>
        <begin position="992"/>
        <end position="1021"/>
    </location>
</feature>
<feature type="compositionally biased region" description="Low complexity" evidence="3">
    <location>
        <begin position="324"/>
        <end position="344"/>
    </location>
</feature>
<feature type="compositionally biased region" description="Pro residues" evidence="3">
    <location>
        <begin position="729"/>
        <end position="744"/>
    </location>
</feature>
<feature type="compositionally biased region" description="Polar residues" evidence="3">
    <location>
        <begin position="758"/>
        <end position="767"/>
    </location>
</feature>
<feature type="compositionally biased region" description="Basic residues" evidence="3">
    <location>
        <begin position="772"/>
        <end position="794"/>
    </location>
</feature>
<feature type="compositionally biased region" description="Low complexity" evidence="3">
    <location>
        <begin position="799"/>
        <end position="808"/>
    </location>
</feature>
<feature type="splice variant" id="VSP_059952" description="In isoform 4.">
    <location>
        <begin position="290"/>
        <end position="1021"/>
    </location>
</feature>
<feature type="splice variant" id="VSP_059953" description="In isoform 5.">
    <original>VRPTVILRDTAIRSDGPSSTRHLD</original>
    <variation>SPPRLLSFWPSADPELPSLDPRAT</variation>
    <location>
        <begin position="386"/>
        <end position="409"/>
    </location>
</feature>
<feature type="splice variant" id="VSP_059954" description="In isoform 5.">
    <location>
        <begin position="410"/>
        <end position="1021"/>
    </location>
</feature>
<feature type="splice variant" id="VSP_059955" description="In isoform 3.">
    <original>EEKKQRKKEKSGSSGEKGALQRSKTLMNLFFKGGR</original>
    <variation>ALPGAPSYLQRRRNNGRRRSRDLLGRRGPCSAPRR</variation>
    <location>
        <begin position="442"/>
        <end position="476"/>
    </location>
</feature>
<feature type="splice variant" id="VSP_059956" description="In isoform 3.">
    <location>
        <begin position="477"/>
        <end position="1021"/>
    </location>
</feature>
<feature type="splice variant" id="VSP_059957" description="In isoform 2.">
    <original>AGSVGPVQKFVTWRLRRDRERGRALLSARSGSPSGQAPTVNEQVQA</original>
    <variation>VPRMLVSHGSQPSSLARPLSFHDSSFPLCFLKRGVWGLCRSLSPGD</variation>
    <location>
        <begin position="508"/>
        <end position="553"/>
    </location>
</feature>
<feature type="splice variant" id="VSP_059958" description="In isoform 2.">
    <location>
        <begin position="554"/>
        <end position="1021"/>
    </location>
</feature>
<feature type="helix" evidence="12">
    <location>
        <begin position="548"/>
        <end position="568"/>
    </location>
</feature>
<feature type="helix" evidence="12">
    <location>
        <begin position="571"/>
        <end position="587"/>
    </location>
</feature>
<feature type="helix" evidence="12">
    <location>
        <begin position="590"/>
        <end position="600"/>
    </location>
</feature>
<feature type="helix" evidence="12">
    <location>
        <begin position="605"/>
        <end position="609"/>
    </location>
</feature>
<feature type="helix" evidence="12">
    <location>
        <begin position="610"/>
        <end position="614"/>
    </location>
</feature>
<feature type="helix" evidence="12">
    <location>
        <begin position="619"/>
        <end position="621"/>
    </location>
</feature>
<feature type="helix" evidence="12">
    <location>
        <begin position="622"/>
        <end position="641"/>
    </location>
</feature>
<feature type="strand" evidence="13">
    <location>
        <begin position="856"/>
        <end position="861"/>
    </location>
</feature>
<feature type="strand" evidence="13">
    <location>
        <begin position="870"/>
        <end position="873"/>
    </location>
</feature>
<feature type="strand" evidence="13">
    <location>
        <begin position="885"/>
        <end position="889"/>
    </location>
</feature>
<feature type="helix" evidence="13">
    <location>
        <begin position="895"/>
        <end position="897"/>
    </location>
</feature>
<feature type="strand" evidence="13">
    <location>
        <begin position="906"/>
        <end position="910"/>
    </location>
</feature>
<feature type="helix" evidence="13">
    <location>
        <begin position="920"/>
        <end position="932"/>
    </location>
</feature>
<feature type="strand" evidence="13">
    <location>
        <begin position="938"/>
        <end position="944"/>
    </location>
</feature>
<sequence length="1021" mass="110694">MARGFTVGFDPLGLGELSSGSLSSVSSRGHLGSDSGSTATRYLLRKQQRLLNGPSRGIRASSPMGRVILINSPIEANSDESDIIHAVRVEKSPSGRLGFSVRGGSEHGLGIFVSKVEEGSSAERAGLCVGDKITEVNGLSLESTTMGSAVRLLTSSSCLHMMVRRMGRVPGIKFSKEKTTWVDVVNRRLVVEKCSSTPSDRSSEDGVRRIVHLYTTSDDFCLGFNIRGGKEFGLGIYVSKVDHGGLAEENGIKVGDQVLAANGVRFDDISHSQAVEVLKGQTHIMLTIKETGRYPAYKEMVSEYCWLDRLSNGVLQQLSPASESSSSVSSYASSAPCSSGSLPSDRMDVCLGPEEPTSHGPGWGRADTAMQTEPDLDSRVETWCSVRPTVILRDTAIRSDGPSSTRHLDSALSESPKTALLLALSRPRTPITRSQSHLTLWEEKKQRKKEKSGSSGEKGALQRSKTLMNLFFKGGRQGRPAGDGHREAWTLDSRSPTKVRPRLDLEKAGSVGPVQKFVTWRLRRDRERGRALLSARSGSPSGQAPTVNEQVQAWESRRPLIQDLARRLLTDDEVLAVTRHCSRYVHEGGVEDLVRPLLAILDRPTKLLLLRDIRSVVAPTDLGRFDSMVMPVELEAFEALKSRAVGPSALRPTRQDTPPKRHLITPVPDSRGGFYLLPVNSSEDEDGEIREKLGVLKVSLGASAPHHKGIPPLQDVPVDAFSLRRGACAPPPQPPPVAPRPPRPNWLLTEPLSREDTQQNQSQTPAQSCSRSRSRSRSRSHSRGQGKSPGRRRSPSPAPIATAATANGRYHRPRKARPLLPRLLDGQVAKVGARQGPLENGRIAEEAVGNVSTGALRTITLSKMKQSLGISISGGIESKVQPMVKIEKIFPGGAAFLCGDLQAGFELVAVDGESLEQVTHQRAVDTIRRAYRNKAREPMELVVRVPGPGLLPLASDLRVVKDQSLAPDCPSALGPVDDARILTQLPPPEARQLQQSLSSALKVPQSIPKLSPILKDPHDPS</sequence>
<proteinExistence type="evidence at protein level"/>
<reference key="1">
    <citation type="journal article" date="2014" name="Hum. Mol. Genet.">
        <title>Deletion of PDZD7 disrupts the Usher syndrome type 2 protein complex in cochlear hair cells and causes hearing loss in mice.</title>
        <authorList>
            <person name="Zou J."/>
            <person name="Zheng T."/>
            <person name="Ren C."/>
            <person name="Askew C."/>
            <person name="Liu X.P."/>
            <person name="Pan B."/>
            <person name="Holt J.R."/>
            <person name="Wang Y."/>
            <person name="Yang J."/>
        </authorList>
    </citation>
    <scope>NUCLEOTIDE SEQUENCE [MRNA] (ISOFORMS 2; 3; 4)</scope>
    <scope>FUNCTION</scope>
    <scope>DISRUPTION PHENOTYPE</scope>
    <scope>SUBCELLULAR LOCATION</scope>
    <scope>TISSUE SPECIFICITY</scope>
    <scope>ALTERNATIVE SPLICING</scope>
    <scope>DEVELOPMENTAL STAGE</scope>
    <source>
        <strain>C57BL/6J</strain>
        <tissue>Retina</tissue>
    </source>
</reference>
<reference key="2">
    <citation type="journal article" date="2009" name="PLoS Biol.">
        <title>Lineage-specific biology revealed by a finished genome assembly of the mouse.</title>
        <authorList>
            <person name="Church D.M."/>
            <person name="Goodstadt L."/>
            <person name="Hillier L.W."/>
            <person name="Zody M.C."/>
            <person name="Goldstein S."/>
            <person name="She X."/>
            <person name="Bult C.J."/>
            <person name="Agarwala R."/>
            <person name="Cherry J.L."/>
            <person name="DiCuccio M."/>
            <person name="Hlavina W."/>
            <person name="Kapustin Y."/>
            <person name="Meric P."/>
            <person name="Maglott D."/>
            <person name="Birtle Z."/>
            <person name="Marques A.C."/>
            <person name="Graves T."/>
            <person name="Zhou S."/>
            <person name="Teague B."/>
            <person name="Potamousis K."/>
            <person name="Churas C."/>
            <person name="Place M."/>
            <person name="Herschleb J."/>
            <person name="Runnheim R."/>
            <person name="Forrest D."/>
            <person name="Amos-Landgraf J."/>
            <person name="Schwartz D.C."/>
            <person name="Cheng Z."/>
            <person name="Lindblad-Toh K."/>
            <person name="Eichler E.E."/>
            <person name="Ponting C.P."/>
        </authorList>
    </citation>
    <scope>NUCLEOTIDE SEQUENCE [LARGE SCALE GENOMIC DNA]</scope>
    <source>
        <strain>C57BL/6J</strain>
    </source>
</reference>
<reference key="3">
    <citation type="journal article" date="2012" name="J. Neurosci.">
        <title>Localization of PDZD7 to the stereocilia ankle-link associates this scaffolding protein with the Usher syndrome protein network.</title>
        <authorList>
            <person name="Grati M."/>
            <person name="Shin J.B."/>
            <person name="Weston M.D."/>
            <person name="Green J."/>
            <person name="Bhat M.A."/>
            <person name="Gillespie P.G."/>
            <person name="Kachar B."/>
        </authorList>
    </citation>
    <scope>INTERACTION WITH ADGRV1 AND USH2A</scope>
</reference>
<reference key="4">
    <citation type="journal article" date="2014" name="J. Biol. Chem.">
        <title>Constitutive Galphai coupling activity of very large G protein-coupled receptor 1 (VLGR1) and its regulation by PDZD7 protein.</title>
        <authorList>
            <person name="Hu Q.X."/>
            <person name="Dong J.H."/>
            <person name="Du H.B."/>
            <person name="Zhang D.L."/>
            <person name="Ren H.Z."/>
            <person name="Ma M.L."/>
            <person name="Cai Y."/>
            <person name="Zhao T.C."/>
            <person name="Yin X.L."/>
            <person name="Yu X."/>
            <person name="Xue T."/>
            <person name="Xu Z.G."/>
            <person name="Sun J.P."/>
        </authorList>
    </citation>
    <scope>FUNCTION</scope>
    <scope>INTERACTION WITH ADGRV1</scope>
</reference>
<reference key="5">
    <citation type="journal article" date="2014" name="J. Biol. Chem.">
        <title>Whirlin and PDZ domain-containing 7 (PDZD7) proteins are both required to form the quaternary protein complex associated with Usher syndrome type 2.</title>
        <authorList>
            <person name="Chen Q."/>
            <person name="Zou J."/>
            <person name="Shen Z."/>
            <person name="Zhang W."/>
            <person name="Yang J."/>
        </authorList>
    </citation>
    <scope>IDENTIFICATION IN THE USH2 COMPLEX</scope>
    <scope>SUBUNIT</scope>
    <scope>INTERACTION WITH WHRN</scope>
</reference>
<reference key="6">
    <citation type="journal article" date="2016" name="Elife">
        <title>PDZD7-MYO7A complex identified in enriched stereocilia membranes.</title>
        <authorList>
            <person name="Morgan C.P."/>
            <person name="Krey J.F."/>
            <person name="Grati M."/>
            <person name="Zhao B."/>
            <person name="Fallen S."/>
            <person name="Kannan-Sundhari A."/>
            <person name="Liu X.Z."/>
            <person name="Choi D."/>
            <person name="Mueller U."/>
            <person name="Barr-Gillespie P.G."/>
        </authorList>
    </citation>
    <scope>INTERACTION WITH MYO7A</scope>
    <scope>SUBCELLULAR LOCATION</scope>
</reference>
<name>PDZD7_MOUSE</name>